<comment type="function">
    <text evidence="1">Produces ATP from ADP in the presence of a proton gradient across the membrane.</text>
</comment>
<comment type="subunit">
    <text evidence="1">F-type ATPases have 2 components, CF(1) - the catalytic core - and CF(0) - the membrane proton channel. CF(1) has five subunits: alpha(3), beta(3), gamma(1), delta(1), epsilon(1). CF(0) has three main subunits: a, b and c.</text>
</comment>
<comment type="subcellular location">
    <subcellularLocation>
        <location evidence="1">Cell inner membrane</location>
        <topology evidence="1">Peripheral membrane protein</topology>
    </subcellularLocation>
</comment>
<comment type="similarity">
    <text evidence="1">Belongs to the ATPase epsilon chain family.</text>
</comment>
<accession>A3P0Y9</accession>
<gene>
    <name evidence="1" type="primary">atpC</name>
    <name type="ordered locus">BURPS1106A_4041</name>
</gene>
<evidence type="ECO:0000255" key="1">
    <source>
        <dbReference type="HAMAP-Rule" id="MF_00530"/>
    </source>
</evidence>
<proteinExistence type="inferred from homology"/>
<keyword id="KW-0066">ATP synthesis</keyword>
<keyword id="KW-0997">Cell inner membrane</keyword>
<keyword id="KW-1003">Cell membrane</keyword>
<keyword id="KW-0139">CF(1)</keyword>
<keyword id="KW-0375">Hydrogen ion transport</keyword>
<keyword id="KW-0406">Ion transport</keyword>
<keyword id="KW-0472">Membrane</keyword>
<keyword id="KW-0813">Transport</keyword>
<reference key="1">
    <citation type="journal article" date="2010" name="Genome Biol. Evol.">
        <title>Continuing evolution of Burkholderia mallei through genome reduction and large-scale rearrangements.</title>
        <authorList>
            <person name="Losada L."/>
            <person name="Ronning C.M."/>
            <person name="DeShazer D."/>
            <person name="Woods D."/>
            <person name="Fedorova N."/>
            <person name="Kim H.S."/>
            <person name="Shabalina S.A."/>
            <person name="Pearson T.R."/>
            <person name="Brinkac L."/>
            <person name="Tan P."/>
            <person name="Nandi T."/>
            <person name="Crabtree J."/>
            <person name="Badger J."/>
            <person name="Beckstrom-Sternberg S."/>
            <person name="Saqib M."/>
            <person name="Schutzer S.E."/>
            <person name="Keim P."/>
            <person name="Nierman W.C."/>
        </authorList>
    </citation>
    <scope>NUCLEOTIDE SEQUENCE [LARGE SCALE GENOMIC DNA]</scope>
    <source>
        <strain>1106a</strain>
    </source>
</reference>
<sequence>MATIKVDVVSAEEQIFSGQAKFVALPGEAGELGILPGHTPLITRIRPGAVRIESESGDEEFVFVAGGILEVQPGAVTVLADTAIRGKDLDAAKAEEARKRAEETLQNAKSDIDLAKAQSELATAMAQLEAIQRLAKIRGKH</sequence>
<protein>
    <recommendedName>
        <fullName evidence="1">ATP synthase epsilon chain</fullName>
    </recommendedName>
    <alternativeName>
        <fullName evidence="1">ATP synthase F1 sector epsilon subunit</fullName>
    </alternativeName>
    <alternativeName>
        <fullName evidence="1">F-ATPase epsilon subunit</fullName>
    </alternativeName>
</protein>
<organism>
    <name type="scientific">Burkholderia pseudomallei (strain 1106a)</name>
    <dbReference type="NCBI Taxonomy" id="357348"/>
    <lineage>
        <taxon>Bacteria</taxon>
        <taxon>Pseudomonadati</taxon>
        <taxon>Pseudomonadota</taxon>
        <taxon>Betaproteobacteria</taxon>
        <taxon>Burkholderiales</taxon>
        <taxon>Burkholderiaceae</taxon>
        <taxon>Burkholderia</taxon>
        <taxon>pseudomallei group</taxon>
    </lineage>
</organism>
<name>ATPE_BURP0</name>
<dbReference type="EMBL" id="CP000572">
    <property type="protein sequence ID" value="ABN91069.1"/>
    <property type="molecule type" value="Genomic_DNA"/>
</dbReference>
<dbReference type="RefSeq" id="WP_004195832.1">
    <property type="nucleotide sequence ID" value="NC_009076.1"/>
</dbReference>
<dbReference type="SMR" id="A3P0Y9"/>
<dbReference type="KEGG" id="bpl:BURPS1106A_4041"/>
<dbReference type="HOGENOM" id="CLU_084338_2_0_4"/>
<dbReference type="Proteomes" id="UP000006738">
    <property type="component" value="Chromosome I"/>
</dbReference>
<dbReference type="GO" id="GO:0005886">
    <property type="term" value="C:plasma membrane"/>
    <property type="evidence" value="ECO:0007669"/>
    <property type="project" value="UniProtKB-SubCell"/>
</dbReference>
<dbReference type="GO" id="GO:0045259">
    <property type="term" value="C:proton-transporting ATP synthase complex"/>
    <property type="evidence" value="ECO:0007669"/>
    <property type="project" value="UniProtKB-KW"/>
</dbReference>
<dbReference type="GO" id="GO:0005524">
    <property type="term" value="F:ATP binding"/>
    <property type="evidence" value="ECO:0007669"/>
    <property type="project" value="UniProtKB-UniRule"/>
</dbReference>
<dbReference type="GO" id="GO:0046933">
    <property type="term" value="F:proton-transporting ATP synthase activity, rotational mechanism"/>
    <property type="evidence" value="ECO:0007669"/>
    <property type="project" value="UniProtKB-UniRule"/>
</dbReference>
<dbReference type="CDD" id="cd12152">
    <property type="entry name" value="F1-ATPase_delta"/>
    <property type="match status" value="1"/>
</dbReference>
<dbReference type="FunFam" id="2.60.15.10:FF:000001">
    <property type="entry name" value="ATP synthase epsilon chain"/>
    <property type="match status" value="1"/>
</dbReference>
<dbReference type="Gene3D" id="1.20.5.440">
    <property type="entry name" value="ATP synthase delta/epsilon subunit, C-terminal domain"/>
    <property type="match status" value="1"/>
</dbReference>
<dbReference type="Gene3D" id="2.60.15.10">
    <property type="entry name" value="F0F1 ATP synthase delta/epsilon subunit, N-terminal"/>
    <property type="match status" value="1"/>
</dbReference>
<dbReference type="HAMAP" id="MF_00530">
    <property type="entry name" value="ATP_synth_epsil_bac"/>
    <property type="match status" value="1"/>
</dbReference>
<dbReference type="InterPro" id="IPR036794">
    <property type="entry name" value="ATP_F1_dsu/esu_C_sf"/>
</dbReference>
<dbReference type="InterPro" id="IPR001469">
    <property type="entry name" value="ATP_synth_F1_dsu/esu"/>
</dbReference>
<dbReference type="InterPro" id="IPR020546">
    <property type="entry name" value="ATP_synth_F1_dsu/esu_N"/>
</dbReference>
<dbReference type="InterPro" id="IPR020547">
    <property type="entry name" value="ATP_synth_F1_esu_C"/>
</dbReference>
<dbReference type="InterPro" id="IPR036771">
    <property type="entry name" value="ATPsynth_dsu/esu_N"/>
</dbReference>
<dbReference type="NCBIfam" id="TIGR01216">
    <property type="entry name" value="ATP_synt_epsi"/>
    <property type="match status" value="1"/>
</dbReference>
<dbReference type="NCBIfam" id="NF001847">
    <property type="entry name" value="PRK00571.1-4"/>
    <property type="match status" value="1"/>
</dbReference>
<dbReference type="PANTHER" id="PTHR13822">
    <property type="entry name" value="ATP SYNTHASE DELTA/EPSILON CHAIN"/>
    <property type="match status" value="1"/>
</dbReference>
<dbReference type="PANTHER" id="PTHR13822:SF10">
    <property type="entry name" value="ATP SYNTHASE EPSILON CHAIN, CHLOROPLASTIC"/>
    <property type="match status" value="1"/>
</dbReference>
<dbReference type="Pfam" id="PF00401">
    <property type="entry name" value="ATP-synt_DE"/>
    <property type="match status" value="1"/>
</dbReference>
<dbReference type="Pfam" id="PF02823">
    <property type="entry name" value="ATP-synt_DE_N"/>
    <property type="match status" value="1"/>
</dbReference>
<dbReference type="SUPFAM" id="SSF46604">
    <property type="entry name" value="Epsilon subunit of F1F0-ATP synthase C-terminal domain"/>
    <property type="match status" value="1"/>
</dbReference>
<dbReference type="SUPFAM" id="SSF51344">
    <property type="entry name" value="Epsilon subunit of F1F0-ATP synthase N-terminal domain"/>
    <property type="match status" value="1"/>
</dbReference>
<feature type="chain" id="PRO_1000056463" description="ATP synthase epsilon chain">
    <location>
        <begin position="1"/>
        <end position="141"/>
    </location>
</feature>